<protein>
    <recommendedName>
        <fullName>Probable porphobilinogen deaminase</fullName>
        <shortName>PBG</shortName>
        <ecNumber>2.5.1.61</ecNumber>
    </recommendedName>
    <alternativeName>
        <fullName>Hydroxymethylbilane synthase</fullName>
        <shortName>HMBS</shortName>
    </alternativeName>
    <alternativeName>
        <fullName>Pre-uroporphyrinogen synthase</fullName>
    </alternativeName>
</protein>
<evidence type="ECO:0000250" key="1"/>
<evidence type="ECO:0000256" key="2">
    <source>
        <dbReference type="SAM" id="MobiDB-lite"/>
    </source>
</evidence>
<evidence type="ECO:0000305" key="3"/>
<organism>
    <name type="scientific">Halobacterium salinarum (strain ATCC 700922 / JCM 11081 / NRC-1)</name>
    <name type="common">Halobacterium halobium</name>
    <dbReference type="NCBI Taxonomy" id="64091"/>
    <lineage>
        <taxon>Archaea</taxon>
        <taxon>Methanobacteriati</taxon>
        <taxon>Methanobacteriota</taxon>
        <taxon>Stenosarchaea group</taxon>
        <taxon>Halobacteria</taxon>
        <taxon>Halobacteriales</taxon>
        <taxon>Halobacteriaceae</taxon>
        <taxon>Halobacterium</taxon>
        <taxon>Halobacterium salinarum NRC-34001</taxon>
    </lineage>
</organism>
<feature type="chain" id="PRO_0000143022" description="Probable porphobilinogen deaminase">
    <location>
        <begin position="1"/>
        <end position="396"/>
    </location>
</feature>
<feature type="region of interest" description="Insert">
    <location>
        <begin position="159"/>
        <end position="245"/>
    </location>
</feature>
<feature type="region of interest" description="Disordered" evidence="2">
    <location>
        <begin position="159"/>
        <end position="224"/>
    </location>
</feature>
<feature type="compositionally biased region" description="Basic and acidic residues" evidence="2">
    <location>
        <begin position="162"/>
        <end position="189"/>
    </location>
</feature>
<feature type="compositionally biased region" description="Acidic residues" evidence="2">
    <location>
        <begin position="200"/>
        <end position="215"/>
    </location>
</feature>
<feature type="modified residue" description="S-(dipyrrolylmethanemethyl)cysteine" evidence="1">
    <location>
        <position position="328"/>
    </location>
</feature>
<keyword id="KW-0627">Porphyrin biosynthesis</keyword>
<keyword id="KW-1185">Reference proteome</keyword>
<keyword id="KW-0808">Transferase</keyword>
<proteinExistence type="inferred from homology"/>
<name>HEM3_HALSA</name>
<gene>
    <name type="primary">hemC</name>
    <name type="synonym">hem3</name>
    <name type="ordered locus">VNG_2330G</name>
</gene>
<sequence length="396" mass="42813">MSSQQIRLATRGSDLALRQAGEVVDTLEDRRHDVELVEVETEGDRVTDALISDLGKTGAFVRALDQEVMEGTVDAAVHSMKDVPTEVPEDLVVAAVPHRENPADVLVTPDGTDLEDLPAGSVVGTASLRRGAQVQAHRPGLDVEPIRGNVGTRVEKLLAPALHREHERRTEAEKEAQSRDAREQRRGDYTADIEAGVENLDTEDGEEGAADDGDDTASSSEFEQSVTEWFDSLTPLQQSAMERDPDTEYDALVMARVGLERTGLLHHVGIEELSTGTHVPATGQGALCVTARRDSDVVDTLRDALEHVRTRVEVTAERVVLEELGGGCIAPIGVHALVQGDTIRTAVQVFSQDGSEQVGETRELDAEQYATDARELAADLRDRGAADLIEDARTEA</sequence>
<reference key="1">
    <citation type="journal article" date="2000" name="Proc. Natl. Acad. Sci. U.S.A.">
        <title>Genome sequence of Halobacterium species NRC-1.</title>
        <authorList>
            <person name="Ng W.V."/>
            <person name="Kennedy S.P."/>
            <person name="Mahairas G.G."/>
            <person name="Berquist B."/>
            <person name="Pan M."/>
            <person name="Shukla H.D."/>
            <person name="Lasky S.R."/>
            <person name="Baliga N.S."/>
            <person name="Thorsson V."/>
            <person name="Sbrogna J."/>
            <person name="Swartzell S."/>
            <person name="Weir D."/>
            <person name="Hall J."/>
            <person name="Dahl T.A."/>
            <person name="Welti R."/>
            <person name="Goo Y.A."/>
            <person name="Leithauser B."/>
            <person name="Keller K."/>
            <person name="Cruz R."/>
            <person name="Danson M.J."/>
            <person name="Hough D.W."/>
            <person name="Maddocks D.G."/>
            <person name="Jablonski P.E."/>
            <person name="Krebs M.P."/>
            <person name="Angevine C.M."/>
            <person name="Dale H."/>
            <person name="Isenbarger T.A."/>
            <person name="Peck R.F."/>
            <person name="Pohlschroder M."/>
            <person name="Spudich J.L."/>
            <person name="Jung K.-H."/>
            <person name="Alam M."/>
            <person name="Freitas T."/>
            <person name="Hou S."/>
            <person name="Daniels C.J."/>
            <person name="Dennis P.P."/>
            <person name="Omer A.D."/>
            <person name="Ebhardt H."/>
            <person name="Lowe T.M."/>
            <person name="Liang P."/>
            <person name="Riley M."/>
            <person name="Hood L."/>
            <person name="DasSarma S."/>
        </authorList>
    </citation>
    <scope>NUCLEOTIDE SEQUENCE [LARGE SCALE GENOMIC DNA]</scope>
    <source>
        <strain>ATCC 700922 / JCM 11081 / NRC-1</strain>
    </source>
</reference>
<accession>Q9HMY5</accession>
<comment type="function">
    <text evidence="1">Tetrapolymerization of the monopyrrole PBG into the hydroxymethylbilane pre-uroporphyrinogen in several discrete steps.</text>
</comment>
<comment type="catalytic activity">
    <reaction>
        <text>4 porphobilinogen + H2O = hydroxymethylbilane + 4 NH4(+)</text>
        <dbReference type="Rhea" id="RHEA:13185"/>
        <dbReference type="ChEBI" id="CHEBI:15377"/>
        <dbReference type="ChEBI" id="CHEBI:28938"/>
        <dbReference type="ChEBI" id="CHEBI:57845"/>
        <dbReference type="ChEBI" id="CHEBI:58126"/>
        <dbReference type="EC" id="2.5.1.61"/>
    </reaction>
</comment>
<comment type="cofactor">
    <cofactor evidence="1">
        <name>dipyrromethane</name>
        <dbReference type="ChEBI" id="CHEBI:60342"/>
    </cofactor>
    <text evidence="1">Binds 1 dipyrromethane group covalently.</text>
</comment>
<comment type="pathway">
    <text>Porphyrin-containing compound metabolism; protoporphyrin-IX biosynthesis; coproporphyrinogen-III from 5-aminolevulinate: step 2/4.</text>
</comment>
<comment type="miscellaneous">
    <text evidence="1">The porphobilinogen subunits are added to the dipyrromethane group.</text>
</comment>
<comment type="similarity">
    <text evidence="3">Belongs to the HMBS family.</text>
</comment>
<dbReference type="EC" id="2.5.1.61"/>
<dbReference type="EMBL" id="AE004437">
    <property type="protein sequence ID" value="AAG20436.1"/>
    <property type="molecule type" value="Genomic_DNA"/>
</dbReference>
<dbReference type="PIR" id="H84383">
    <property type="entry name" value="H84383"/>
</dbReference>
<dbReference type="RefSeq" id="WP_010903738.1">
    <property type="nucleotide sequence ID" value="NC_002607.1"/>
</dbReference>
<dbReference type="SMR" id="Q9HMY5"/>
<dbReference type="FunCoup" id="Q9HMY5">
    <property type="interactions" value="201"/>
</dbReference>
<dbReference type="STRING" id="64091.VNG_2330G"/>
<dbReference type="PaxDb" id="64091-VNG_2330G"/>
<dbReference type="GeneID" id="68694872"/>
<dbReference type="KEGG" id="hal:VNG_2330G"/>
<dbReference type="PATRIC" id="fig|64091.14.peg.1803"/>
<dbReference type="HOGENOM" id="CLU_019704_1_0_2"/>
<dbReference type="InParanoid" id="Q9HMY5"/>
<dbReference type="OrthoDB" id="8042at2157"/>
<dbReference type="PhylomeDB" id="Q9HMY5"/>
<dbReference type="UniPathway" id="UPA00251">
    <property type="reaction ID" value="UER00319"/>
</dbReference>
<dbReference type="Proteomes" id="UP000000554">
    <property type="component" value="Chromosome"/>
</dbReference>
<dbReference type="GO" id="GO:0005737">
    <property type="term" value="C:cytoplasm"/>
    <property type="evidence" value="ECO:0000318"/>
    <property type="project" value="GO_Central"/>
</dbReference>
<dbReference type="GO" id="GO:0004418">
    <property type="term" value="F:hydroxymethylbilane synthase activity"/>
    <property type="evidence" value="ECO:0000318"/>
    <property type="project" value="GO_Central"/>
</dbReference>
<dbReference type="GO" id="GO:0006783">
    <property type="term" value="P:heme biosynthetic process"/>
    <property type="evidence" value="ECO:0000318"/>
    <property type="project" value="GO_Central"/>
</dbReference>
<dbReference type="GO" id="GO:0006782">
    <property type="term" value="P:protoporphyrinogen IX biosynthetic process"/>
    <property type="evidence" value="ECO:0007669"/>
    <property type="project" value="UniProtKB-UniPathway"/>
</dbReference>
<dbReference type="CDD" id="cd13644">
    <property type="entry name" value="PBP2_HemC_archaea"/>
    <property type="match status" value="1"/>
</dbReference>
<dbReference type="FunFam" id="3.30.160.40:FF:000014">
    <property type="entry name" value="Probable porphobilinogen deaminase"/>
    <property type="match status" value="1"/>
</dbReference>
<dbReference type="Gene3D" id="3.40.190.10">
    <property type="entry name" value="Periplasmic binding protein-like II"/>
    <property type="match status" value="1"/>
</dbReference>
<dbReference type="Gene3D" id="3.30.160.40">
    <property type="entry name" value="Porphobilinogen deaminase, C-terminal domain"/>
    <property type="match status" value="1"/>
</dbReference>
<dbReference type="InterPro" id="IPR000860">
    <property type="entry name" value="HemC"/>
</dbReference>
<dbReference type="InterPro" id="IPR022419">
    <property type="entry name" value="Porphobilin_deaminase_cofac_BS"/>
</dbReference>
<dbReference type="InterPro" id="IPR022417">
    <property type="entry name" value="Porphobilin_deaminase_N"/>
</dbReference>
<dbReference type="InterPro" id="IPR022418">
    <property type="entry name" value="Porphobilinogen_deaminase_C"/>
</dbReference>
<dbReference type="InterPro" id="IPR036803">
    <property type="entry name" value="Porphobilinogen_deaminase_C_sf"/>
</dbReference>
<dbReference type="NCBIfam" id="TIGR00212">
    <property type="entry name" value="hemC"/>
    <property type="match status" value="1"/>
</dbReference>
<dbReference type="PANTHER" id="PTHR11557">
    <property type="entry name" value="PORPHOBILINOGEN DEAMINASE"/>
    <property type="match status" value="1"/>
</dbReference>
<dbReference type="PANTHER" id="PTHR11557:SF0">
    <property type="entry name" value="PORPHOBILINOGEN DEAMINASE"/>
    <property type="match status" value="1"/>
</dbReference>
<dbReference type="Pfam" id="PF01379">
    <property type="entry name" value="Porphobil_deam"/>
    <property type="match status" value="2"/>
</dbReference>
<dbReference type="Pfam" id="PF03900">
    <property type="entry name" value="Porphobil_deamC"/>
    <property type="match status" value="1"/>
</dbReference>
<dbReference type="PRINTS" id="PR00151">
    <property type="entry name" value="PORPHBDMNASE"/>
</dbReference>
<dbReference type="SUPFAM" id="SSF53850">
    <property type="entry name" value="Periplasmic binding protein-like II"/>
    <property type="match status" value="2"/>
</dbReference>
<dbReference type="SUPFAM" id="SSF54782">
    <property type="entry name" value="Porphobilinogen deaminase (hydroxymethylbilane synthase), C-terminal domain"/>
    <property type="match status" value="1"/>
</dbReference>
<dbReference type="PROSITE" id="PS00533">
    <property type="entry name" value="PORPHOBILINOGEN_DEAM"/>
    <property type="match status" value="1"/>
</dbReference>